<keyword id="KW-0007">Acetylation</keyword>
<keyword id="KW-0175">Coiled coil</keyword>
<keyword id="KW-0963">Cytoplasm</keyword>
<keyword id="KW-0931">ER-Golgi transport</keyword>
<keyword id="KW-0333">Golgi apparatus</keyword>
<keyword id="KW-0343">GTPase activation</keyword>
<keyword id="KW-0472">Membrane</keyword>
<keyword id="KW-0479">Metal-binding</keyword>
<keyword id="KW-0597">Phosphoprotein</keyword>
<keyword id="KW-0653">Protein transport</keyword>
<keyword id="KW-1185">Reference proteome</keyword>
<keyword id="KW-0813">Transport</keyword>
<keyword id="KW-0862">Zinc</keyword>
<keyword id="KW-0863">Zinc-finger</keyword>
<evidence type="ECO:0000250" key="1"/>
<evidence type="ECO:0000250" key="2">
    <source>
        <dbReference type="UniProtKB" id="Q8N6H7"/>
    </source>
</evidence>
<evidence type="ECO:0000255" key="3"/>
<evidence type="ECO:0000255" key="4">
    <source>
        <dbReference type="PROSITE-ProRule" id="PRU00288"/>
    </source>
</evidence>
<evidence type="ECO:0000305" key="5"/>
<sequence>MAAEPNKTEIQTLFKRLRAVPTNKACFDCGAKNPSWASITYGVFLCIDCSGVHRSLGVHLSFIRSTELDSNWNWFQLRCMQVGGNANATAFFRQHGCTANDANTKYNSRAAQMYREKIRQLGSAALARHGTDLWIDNMSSAVPNHSPEKKDSDFFTEHTQPPAWDAPPLSLQGPSSQPRLQRAVAWHSRSMAPTQTCLAPHPKPHWNWKSSIIGKKKPAAAKKGLGAKKGLGAQKVSSQSFSEIERQAQVAEKLREQQAADAKKQAEESMVASMRLAYQELQIDRKKEEKKLQNLEGKKREQAERLGMGLVSRSSVSHSVLSEMQVIEQETPVSAKSSRSQLDLFDDVGTFASGPPKYKDNPFSLGESFGSRWDTDAAWGMDRVEEKEPEVTISSIRPISERATNRREVENRSSGLESSEARQKFAGAKAISSDMFFGREVDAEYEARSRLQQLSGSSAISSSDLFGDMDGAHGAGSVSLGNVLPTADIAQFKQGVKSVAGKMAVLANGVMNSLQDRYGSY</sequence>
<dbReference type="EMBL" id="CR858925">
    <property type="protein sequence ID" value="CAH91123.1"/>
    <property type="molecule type" value="mRNA"/>
</dbReference>
<dbReference type="EMBL" id="CR860588">
    <property type="protein sequence ID" value="CAH92710.1"/>
    <property type="status" value="ALT_FRAME"/>
    <property type="molecule type" value="mRNA"/>
</dbReference>
<dbReference type="RefSeq" id="NP_001125657.1">
    <property type="nucleotide sequence ID" value="NM_001132185.1"/>
</dbReference>
<dbReference type="SMR" id="Q5RAT7"/>
<dbReference type="STRING" id="9601.ENSPPYP00000003801"/>
<dbReference type="GeneID" id="100172577"/>
<dbReference type="KEGG" id="pon:100172577"/>
<dbReference type="CTD" id="84364"/>
<dbReference type="eggNOG" id="KOG0706">
    <property type="taxonomic scope" value="Eukaryota"/>
</dbReference>
<dbReference type="InParanoid" id="Q5RAT7"/>
<dbReference type="OrthoDB" id="983479at2759"/>
<dbReference type="Proteomes" id="UP000001595">
    <property type="component" value="Unplaced"/>
</dbReference>
<dbReference type="GO" id="GO:0000139">
    <property type="term" value="C:Golgi membrane"/>
    <property type="evidence" value="ECO:0007669"/>
    <property type="project" value="UniProtKB-SubCell"/>
</dbReference>
<dbReference type="GO" id="GO:0005096">
    <property type="term" value="F:GTPase activator activity"/>
    <property type="evidence" value="ECO:0007669"/>
    <property type="project" value="UniProtKB-KW"/>
</dbReference>
<dbReference type="GO" id="GO:0008270">
    <property type="term" value="F:zinc ion binding"/>
    <property type="evidence" value="ECO:0007669"/>
    <property type="project" value="UniProtKB-KW"/>
</dbReference>
<dbReference type="GO" id="GO:0048205">
    <property type="term" value="P:COPI coating of Golgi vesicle"/>
    <property type="evidence" value="ECO:0007669"/>
    <property type="project" value="TreeGrafter"/>
</dbReference>
<dbReference type="GO" id="GO:0015031">
    <property type="term" value="P:protein transport"/>
    <property type="evidence" value="ECO:0007669"/>
    <property type="project" value="UniProtKB-KW"/>
</dbReference>
<dbReference type="CDD" id="cd09029">
    <property type="entry name" value="ArfGap_ArfGap2"/>
    <property type="match status" value="1"/>
</dbReference>
<dbReference type="FunFam" id="1.10.220.150:FF:000004">
    <property type="entry name" value="Putative ADP-ribosylation factor GTPase-activating protein 2"/>
    <property type="match status" value="1"/>
</dbReference>
<dbReference type="Gene3D" id="1.10.220.150">
    <property type="entry name" value="Arf GTPase activating protein"/>
    <property type="match status" value="1"/>
</dbReference>
<dbReference type="InterPro" id="IPR037278">
    <property type="entry name" value="ARFGAP/RecO"/>
</dbReference>
<dbReference type="InterPro" id="IPR001164">
    <property type="entry name" value="ArfGAP_dom"/>
</dbReference>
<dbReference type="InterPro" id="IPR038508">
    <property type="entry name" value="ArfGAP_dom_sf"/>
</dbReference>
<dbReference type="PANTHER" id="PTHR45686">
    <property type="entry name" value="ADP-RIBOSYLATION FACTOR GTPASE ACTIVATING PROTEIN 3, ISOFORM H-RELATED"/>
    <property type="match status" value="1"/>
</dbReference>
<dbReference type="PANTHER" id="PTHR45686:SF10">
    <property type="entry name" value="ADP-RIBOSYLATION FACTOR GTPASE-ACTIVATING PROTEIN 2"/>
    <property type="match status" value="1"/>
</dbReference>
<dbReference type="Pfam" id="PF01412">
    <property type="entry name" value="ArfGap"/>
    <property type="match status" value="1"/>
</dbReference>
<dbReference type="PRINTS" id="PR00405">
    <property type="entry name" value="REVINTRACTNG"/>
</dbReference>
<dbReference type="SMART" id="SM00105">
    <property type="entry name" value="ArfGap"/>
    <property type="match status" value="1"/>
</dbReference>
<dbReference type="SUPFAM" id="SSF57863">
    <property type="entry name" value="ArfGap/RecO-like zinc finger"/>
    <property type="match status" value="1"/>
</dbReference>
<dbReference type="PROSITE" id="PS50115">
    <property type="entry name" value="ARFGAP"/>
    <property type="match status" value="1"/>
</dbReference>
<comment type="function">
    <text evidence="1">GTPase-activating protein (GAP) for ADP ribosylation factor 1 (ARF1). Implicated in coatomer-mediated protein transport between the Golgi complex and the endoplasmic reticulum. Hydrolysis of ARF1-bound GTP may lead to dissociation of coatomer from Golgi-derived membranes to allow fusion with target membranes (By similarity).</text>
</comment>
<comment type="subunit">
    <text evidence="1">Interacts with the coatomer complex. Interacts with the C-terminal appendage domain of COPG1 (By similarity).</text>
</comment>
<comment type="subcellular location">
    <subcellularLocation>
        <location evidence="1">Cytoplasm</location>
    </subcellularLocation>
    <subcellularLocation>
        <location evidence="1">Golgi apparatus membrane</location>
        <topology evidence="1">Peripheral membrane protein</topology>
        <orientation evidence="1">Cytoplasmic side</orientation>
    </subcellularLocation>
    <text evidence="1">Also found on peripheral punctate structures likely to be endoplasmic reticulum-Golgi intermediate compartment.</text>
</comment>
<comment type="sequence caution" evidence="5">
    <conflict type="frameshift">
        <sequence resource="EMBL-CDS" id="CAH92710"/>
    </conflict>
</comment>
<gene>
    <name type="primary">ARFGAP2</name>
    <name type="synonym">ZNF289</name>
</gene>
<accession>Q5RAT7</accession>
<accession>Q5R6A6</accession>
<proteinExistence type="evidence at transcript level"/>
<reference key="1">
    <citation type="submission" date="2004-11" db="EMBL/GenBank/DDBJ databases">
        <authorList>
            <consortium name="The German cDNA consortium"/>
        </authorList>
    </citation>
    <scope>NUCLEOTIDE SEQUENCE [LARGE SCALE MRNA]</scope>
    <source>
        <tissue>Brain cortex</tissue>
        <tissue>Heart</tissue>
    </source>
</reference>
<feature type="initiator methionine" description="Removed" evidence="2">
    <location>
        <position position="1"/>
    </location>
</feature>
<feature type="chain" id="PRO_0000278470" description="ADP-ribosylation factor GTPase-activating protein 2">
    <location>
        <begin position="2"/>
        <end position="521"/>
    </location>
</feature>
<feature type="domain" description="Arf-GAP" evidence="4">
    <location>
        <begin position="11"/>
        <end position="127"/>
    </location>
</feature>
<feature type="zinc finger region" description="C4-type" evidence="4">
    <location>
        <begin position="26"/>
        <end position="49"/>
    </location>
</feature>
<feature type="region of interest" description="Required for interaction with coatomer" evidence="1">
    <location>
        <begin position="97"/>
        <end position="521"/>
    </location>
</feature>
<feature type="coiled-coil region" evidence="3">
    <location>
        <begin position="242"/>
        <end position="308"/>
    </location>
</feature>
<feature type="modified residue" description="N-acetylalanine" evidence="2">
    <location>
        <position position="2"/>
    </location>
</feature>
<feature type="modified residue" description="Phosphoserine" evidence="2">
    <location>
        <position position="140"/>
    </location>
</feature>
<feature type="modified residue" description="Phosphoserine" evidence="2">
    <location>
        <position position="146"/>
    </location>
</feature>
<feature type="modified residue" description="Phosphoserine" evidence="2">
    <location>
        <position position="237"/>
    </location>
</feature>
<feature type="modified residue" description="Phosphoserine" evidence="2">
    <location>
        <position position="240"/>
    </location>
</feature>
<feature type="modified residue" description="Phosphoserine" evidence="2">
    <location>
        <position position="312"/>
    </location>
</feature>
<feature type="modified residue" description="Phosphoserine" evidence="2">
    <location>
        <position position="334"/>
    </location>
</feature>
<feature type="modified residue" description="Phosphoserine" evidence="2">
    <location>
        <position position="340"/>
    </location>
</feature>
<feature type="modified residue" description="Phosphoserine" evidence="2">
    <location>
        <position position="364"/>
    </location>
</feature>
<feature type="modified residue" description="Phosphoserine" evidence="2">
    <location>
        <position position="368"/>
    </location>
</feature>
<feature type="modified residue" description="Phosphoserine" evidence="2">
    <location>
        <position position="432"/>
    </location>
</feature>
<feature type="modified residue" description="Phosphoserine" evidence="2">
    <location>
        <position position="433"/>
    </location>
</feature>
<feature type="modified residue" description="Phosphoserine" evidence="2">
    <location>
        <position position="513"/>
    </location>
</feature>
<feature type="sequence conflict" description="In Ref. 1; CAH92710." evidence="5" ref="1">
    <original>S</original>
    <variation>R</variation>
    <location>
        <position position="38"/>
    </location>
</feature>
<feature type="sequence conflict" description="In Ref. 1; CAH92710." evidence="5" ref="1">
    <original>N</original>
    <variation>S</variation>
    <location>
        <position position="144"/>
    </location>
</feature>
<feature type="sequence conflict" description="In Ref. 1; CAH92710." evidence="5" ref="1">
    <original>Q</original>
    <variation>R</variation>
    <location>
        <position position="181"/>
    </location>
</feature>
<feature type="sequence conflict" description="In Ref. 1; CAH92710." evidence="5" ref="1">
    <original>A</original>
    <variation>V</variation>
    <location>
        <position position="266"/>
    </location>
</feature>
<feature type="sequence conflict" description="In Ref. 1; CAH92710." evidence="5" ref="1">
    <original>A</original>
    <variation>T</variation>
    <location>
        <position position="272"/>
    </location>
</feature>
<feature type="sequence conflict" description="In Ref. 1; CAH92710." evidence="5" ref="1">
    <original>N</original>
    <variation>S</variation>
    <location>
        <position position="411"/>
    </location>
</feature>
<feature type="sequence conflict" description="In Ref. 1; CAH92710." evidence="5" ref="1">
    <original>M</original>
    <variation>I</variation>
    <location>
        <position position="469"/>
    </location>
</feature>
<protein>
    <recommendedName>
        <fullName>ADP-ribosylation factor GTPase-activating protein 2</fullName>
        <shortName>ARF GAP 2</shortName>
    </recommendedName>
    <alternativeName>
        <fullName>GTPase-activating protein ZNF289</fullName>
    </alternativeName>
    <alternativeName>
        <fullName>Zinc finger protein 289</fullName>
    </alternativeName>
</protein>
<organism>
    <name type="scientific">Pongo abelii</name>
    <name type="common">Sumatran orangutan</name>
    <name type="synonym">Pongo pygmaeus abelii</name>
    <dbReference type="NCBI Taxonomy" id="9601"/>
    <lineage>
        <taxon>Eukaryota</taxon>
        <taxon>Metazoa</taxon>
        <taxon>Chordata</taxon>
        <taxon>Craniata</taxon>
        <taxon>Vertebrata</taxon>
        <taxon>Euteleostomi</taxon>
        <taxon>Mammalia</taxon>
        <taxon>Eutheria</taxon>
        <taxon>Euarchontoglires</taxon>
        <taxon>Primates</taxon>
        <taxon>Haplorrhini</taxon>
        <taxon>Catarrhini</taxon>
        <taxon>Hominidae</taxon>
        <taxon>Pongo</taxon>
    </lineage>
</organism>
<name>ARFG2_PONAB</name>